<accession>C0HJU9</accession>
<name>LYT1_LYCER</name>
<feature type="peptide" id="PRO_0000434015" description="Toxin LyeTx 1" evidence="1">
    <location>
        <begin position="1"/>
        <end position="25"/>
    </location>
</feature>
<feature type="modified residue" description="Leucine amide" evidence="1">
    <location>
        <position position="25"/>
    </location>
</feature>
<feature type="helix" evidence="5">
    <location>
        <begin position="2"/>
        <end position="15"/>
    </location>
</feature>
<feature type="helix" evidence="5">
    <location>
        <begin position="17"/>
        <end position="24"/>
    </location>
</feature>
<sequence>IWLTALKFLGKNLGKHLAKQQLAKL</sequence>
<dbReference type="PDB" id="6CL3">
    <property type="method" value="NMR"/>
    <property type="chains" value="A=1-25"/>
</dbReference>
<dbReference type="PDB" id="7MMM">
    <property type="method" value="NMR"/>
    <property type="chains" value="A=1-25"/>
</dbReference>
<dbReference type="PDBsum" id="6CL3"/>
<dbReference type="PDBsum" id="7MMM"/>
<dbReference type="BMRB" id="C0HJU9"/>
<dbReference type="SMR" id="C0HJU9"/>
<dbReference type="TCDB" id="8.B.10.2.3">
    <property type="family name" value="the psalmotoxin-1 (pctx1) family"/>
</dbReference>
<dbReference type="GO" id="GO:0005576">
    <property type="term" value="C:extracellular region"/>
    <property type="evidence" value="ECO:0007669"/>
    <property type="project" value="UniProtKB-SubCell"/>
</dbReference>
<dbReference type="GO" id="GO:0090729">
    <property type="term" value="F:toxin activity"/>
    <property type="evidence" value="ECO:0007669"/>
    <property type="project" value="UniProtKB-KW"/>
</dbReference>
<dbReference type="GO" id="GO:0042742">
    <property type="term" value="P:defense response to bacterium"/>
    <property type="evidence" value="ECO:0007669"/>
    <property type="project" value="UniProtKB-KW"/>
</dbReference>
<dbReference type="GO" id="GO:0031640">
    <property type="term" value="P:killing of cells of another organism"/>
    <property type="evidence" value="ECO:0007669"/>
    <property type="project" value="UniProtKB-KW"/>
</dbReference>
<reference key="1">
    <citation type="journal article" date="2010" name="Amino Acids">
        <title>LyeTx I, a potent antimicrobial peptide from the venom of the spider Lycosa erythrognatha.</title>
        <authorList>
            <person name="Santos D.M."/>
            <person name="Verly R.M."/>
            <person name="Pilo-Veloso D."/>
            <person name="de Maria M."/>
            <person name="de Carvalho M.A."/>
            <person name="Cisalpino P.S."/>
            <person name="Soares B.M."/>
            <person name="Diniz C.G."/>
            <person name="Farias L.M."/>
            <person name="Moreira D.F."/>
            <person name="Frezard F."/>
            <person name="Bemquerer M.P."/>
            <person name="Pimenta A.M."/>
            <person name="de Lima M.E."/>
        </authorList>
    </citation>
    <scope>PROTEIN SEQUENCE</scope>
    <scope>FUNCTION</scope>
    <scope>SUBCELLULAR LOCATION</scope>
    <scope>MASS SPECTROMETRY</scope>
    <scope>AMIDATION AT LEU-25</scope>
    <scope>STRUCTURE BY NMR</scope>
    <source>
        <tissue>Venom</tissue>
    </source>
</reference>
<organism>
    <name type="scientific">Lycosa erythrognatha</name>
    <name type="common">Wolf spider</name>
    <name type="synonym">Scaptocosa raptoria</name>
    <dbReference type="NCBI Taxonomy" id="332789"/>
    <lineage>
        <taxon>Eukaryota</taxon>
        <taxon>Metazoa</taxon>
        <taxon>Ecdysozoa</taxon>
        <taxon>Arthropoda</taxon>
        <taxon>Chelicerata</taxon>
        <taxon>Arachnida</taxon>
        <taxon>Araneae</taxon>
        <taxon>Araneomorphae</taxon>
        <taxon>Entelegynae</taxon>
        <taxon>Lycosoidea</taxon>
        <taxon>Lycosidae</taxon>
        <taxon>Lycosa</taxon>
    </lineage>
</organism>
<keyword id="KW-0002">3D-structure</keyword>
<keyword id="KW-0027">Amidation</keyword>
<keyword id="KW-0044">Antibiotic</keyword>
<keyword id="KW-0929">Antimicrobial</keyword>
<keyword id="KW-0204">Cytolysis</keyword>
<keyword id="KW-0903">Direct protein sequencing</keyword>
<keyword id="KW-0354">Hemolysis</keyword>
<keyword id="KW-0964">Secreted</keyword>
<keyword id="KW-0800">Toxin</keyword>
<protein>
    <recommendedName>
        <fullName evidence="2">Toxin LyeTx 1</fullName>
    </recommendedName>
</protein>
<proteinExistence type="evidence at protein level"/>
<evidence type="ECO:0000269" key="1">
    <source>
    </source>
</evidence>
<evidence type="ECO:0000303" key="2">
    <source>
    </source>
</evidence>
<evidence type="ECO:0000305" key="3"/>
<evidence type="ECO:0000305" key="4">
    <source>
    </source>
</evidence>
<evidence type="ECO:0007829" key="5">
    <source>
        <dbReference type="PDB" id="6CL3"/>
    </source>
</evidence>
<comment type="function">
    <text evidence="1">Has antimicrobial activity against Gram-positive bacterium S.aureus (MIC=3.79 uM), Gram-negative bacterium E.coli (MIC=7.81 uM) and yeasts C.krusei (MIC=26.3 uM) and C.neoformans (MIC=13.2 uM). Has hemolytic activity against rabbit erythrocytes. Forms pores in lipid bilayers in vitro; pore formation is reduced when cholesterol is present in the bilayers.</text>
</comment>
<comment type="subcellular location">
    <subcellularLocation>
        <location evidence="1">Secreted</location>
    </subcellularLocation>
</comment>
<comment type="tissue specificity">
    <text evidence="4">Expressed by the venom gland.</text>
</comment>
<comment type="mass spectrometry"/>
<comment type="similarity">
    <text evidence="3">Belongs to the cationic peptide 04 (cupiennin) family. 05 subfamily.</text>
</comment>